<gene>
    <name type="primary">DIF1</name>
    <name type="ordered locus">ZYRO0B14014g</name>
</gene>
<reference key="1">
    <citation type="journal article" date="2009" name="Genome Res.">
        <title>Comparative genomics of protoploid Saccharomycetaceae.</title>
        <authorList>
            <consortium name="The Genolevures Consortium"/>
            <person name="Souciet J.-L."/>
            <person name="Dujon B."/>
            <person name="Gaillardin C."/>
            <person name="Johnston M."/>
            <person name="Baret P.V."/>
            <person name="Cliften P."/>
            <person name="Sherman D.J."/>
            <person name="Weissenbach J."/>
            <person name="Westhof E."/>
            <person name="Wincker P."/>
            <person name="Jubin C."/>
            <person name="Poulain J."/>
            <person name="Barbe V."/>
            <person name="Segurens B."/>
            <person name="Artiguenave F."/>
            <person name="Anthouard V."/>
            <person name="Vacherie B."/>
            <person name="Val M.-E."/>
            <person name="Fulton R.S."/>
            <person name="Minx P."/>
            <person name="Wilson R."/>
            <person name="Durrens P."/>
            <person name="Jean G."/>
            <person name="Marck C."/>
            <person name="Martin T."/>
            <person name="Nikolski M."/>
            <person name="Rolland T."/>
            <person name="Seret M.-L."/>
            <person name="Casaregola S."/>
            <person name="Despons L."/>
            <person name="Fairhead C."/>
            <person name="Fischer G."/>
            <person name="Lafontaine I."/>
            <person name="Leh V."/>
            <person name="Lemaire M."/>
            <person name="de Montigny J."/>
            <person name="Neuveglise C."/>
            <person name="Thierry A."/>
            <person name="Blanc-Lenfle I."/>
            <person name="Bleykasten C."/>
            <person name="Diffels J."/>
            <person name="Fritsch E."/>
            <person name="Frangeul L."/>
            <person name="Goeffon A."/>
            <person name="Jauniaux N."/>
            <person name="Kachouri-Lafond R."/>
            <person name="Payen C."/>
            <person name="Potier S."/>
            <person name="Pribylova L."/>
            <person name="Ozanne C."/>
            <person name="Richard G.-F."/>
            <person name="Sacerdot C."/>
            <person name="Straub M.-L."/>
            <person name="Talla E."/>
        </authorList>
    </citation>
    <scope>NUCLEOTIDE SEQUENCE [LARGE SCALE GENOMIC DNA]</scope>
    <source>
        <strain>ATCC 2623 / CBS 732 / BCRC 21506 / NBRC 1130 / NCYC 568 / NRRL Y-229</strain>
    </source>
</reference>
<comment type="function">
    <text evidence="1">Mediates the nuclear localization of the ribonucleotide reductase.</text>
</comment>
<comment type="subcellular location">
    <subcellularLocation>
        <location evidence="1">Cytoplasm</location>
    </subcellularLocation>
    <subcellularLocation>
        <location evidence="1">Nucleus</location>
    </subcellularLocation>
</comment>
<comment type="similarity">
    <text evidence="2">Belongs to the DIF1/spd1 family.</text>
</comment>
<protein>
    <recommendedName>
        <fullName>Damage-regulated import facilitator 1</fullName>
    </recommendedName>
</protein>
<accession>C5DS56</accession>
<feature type="chain" id="PRO_0000399018" description="Damage-regulated import facilitator 1">
    <location>
        <begin position="1"/>
        <end position="118"/>
    </location>
</feature>
<dbReference type="EMBL" id="CU928174">
    <property type="protein sequence ID" value="CAR26617.1"/>
    <property type="molecule type" value="Genomic_DNA"/>
</dbReference>
<dbReference type="RefSeq" id="XP_002495550.1">
    <property type="nucleotide sequence ID" value="XM_002495505.1"/>
</dbReference>
<dbReference type="FunCoup" id="C5DS56">
    <property type="interactions" value="64"/>
</dbReference>
<dbReference type="GeneID" id="8202715"/>
<dbReference type="KEGG" id="zro:ZYRO0B14014g"/>
<dbReference type="HOGENOM" id="CLU_121023_0_0_1"/>
<dbReference type="InParanoid" id="C5DS56"/>
<dbReference type="Proteomes" id="UP000008536">
    <property type="component" value="Chromosome B"/>
</dbReference>
<dbReference type="GO" id="GO:0005737">
    <property type="term" value="C:cytoplasm"/>
    <property type="evidence" value="ECO:0007669"/>
    <property type="project" value="UniProtKB-SubCell"/>
</dbReference>
<dbReference type="GO" id="GO:0005634">
    <property type="term" value="C:nucleus"/>
    <property type="evidence" value="ECO:0007669"/>
    <property type="project" value="UniProtKB-SubCell"/>
</dbReference>
<dbReference type="InterPro" id="IPR013900">
    <property type="entry name" value="RNR_inhibitor"/>
</dbReference>
<dbReference type="Pfam" id="PF08591">
    <property type="entry name" value="RNR_inhib"/>
    <property type="match status" value="1"/>
</dbReference>
<proteinExistence type="inferred from homology"/>
<keyword id="KW-0963">Cytoplasm</keyword>
<keyword id="KW-0539">Nucleus</keyword>
<keyword id="KW-1185">Reference proteome</keyword>
<name>DIF1_ZYGRC</name>
<evidence type="ECO:0000250" key="1"/>
<evidence type="ECO:0000305" key="2"/>
<organism>
    <name type="scientific">Zygosaccharomyces rouxii (strain ATCC 2623 / CBS 732 / NBRC 1130 / NCYC 568 / NRRL Y-229)</name>
    <dbReference type="NCBI Taxonomy" id="559307"/>
    <lineage>
        <taxon>Eukaryota</taxon>
        <taxon>Fungi</taxon>
        <taxon>Dikarya</taxon>
        <taxon>Ascomycota</taxon>
        <taxon>Saccharomycotina</taxon>
        <taxon>Saccharomycetes</taxon>
        <taxon>Saccharomycetales</taxon>
        <taxon>Saccharomycetaceae</taxon>
        <taxon>Zygosaccharomyces</taxon>
    </lineage>
</organism>
<sequence length="118" mass="13782">MLSQPNKKPLHIRIQPQDEKYDCQMKLGTMGMRIRQSVDQGYRLPSKFVQDNSSVTIPDYKRVPLPKNPPMLVNQRTVSSTSSIETWENDLDQRLTTIDDKTLTDKLGMKRNWDQVEF</sequence>